<evidence type="ECO:0000250" key="1"/>
<evidence type="ECO:0000256" key="2">
    <source>
        <dbReference type="SAM" id="MobiDB-lite"/>
    </source>
</evidence>
<evidence type="ECO:0000305" key="3"/>
<sequence length="129" mass="14629">MSRTKETARAKRTITSKKSKKAPSGASGVKRSHRRWRPGTCAIREIRKFQKSTSLLIQCAPFQRLVRGVERQKEGLRFQSSAIMALQEATEAYIVSLMADTNLACIHAKRVTIQPKDIQLALRLRGERH</sequence>
<organism>
    <name type="scientific">Leishmania infantum</name>
    <dbReference type="NCBI Taxonomy" id="5671"/>
    <lineage>
        <taxon>Eukaryota</taxon>
        <taxon>Discoba</taxon>
        <taxon>Euglenozoa</taxon>
        <taxon>Kinetoplastea</taxon>
        <taxon>Metakinetoplastina</taxon>
        <taxon>Trypanosomatida</taxon>
        <taxon>Trypanosomatidae</taxon>
        <taxon>Leishmaniinae</taxon>
        <taxon>Leishmania</taxon>
    </lineage>
</organism>
<reference key="1">
    <citation type="journal article" date="1994" name="Biochim. Biophys. Acta">
        <title>The Leishmania infantum histone H3 possesses an extremely divergent N-terminal domain.</title>
        <authorList>
            <person name="Soto M."/>
            <person name="Requena J.M."/>
            <person name="Morales G."/>
            <person name="Alonso C."/>
        </authorList>
    </citation>
    <scope>NUCLEOTIDE SEQUENCE [MRNA]</scope>
    <source>
        <strain>MHOM/FR/78/LEM 75</strain>
    </source>
</reference>
<name>H3_LEIIN</name>
<comment type="function">
    <text>Core component of nucleosome. Nucleosomes wrap and compact DNA into chromatin, limiting DNA accessibility to the cellular machineries which require DNA as a template. Histones thereby play a central role in transcription regulation, DNA repair, DNA replication and chromosomal stability. DNA accessibility is regulated via a complex set of post-translational modifications of histones, also called histone code, and nucleosome remodeling.</text>
</comment>
<comment type="subunit">
    <text>The nucleosome is a histone octamer containing two molecules each of H2A, H2B, H3 and H4 assembled in one H3-H4 heterotetramer and two H2A-H2B heterodimers. The octamer wraps approximately 147 bp of DNA.</text>
</comment>
<comment type="subcellular location">
    <subcellularLocation>
        <location evidence="1">Nucleus</location>
    </subcellularLocation>
    <subcellularLocation>
        <location evidence="1">Chromosome</location>
    </subcellularLocation>
</comment>
<comment type="similarity">
    <text evidence="3">Belongs to the histone H3 family.</text>
</comment>
<dbReference type="EMBL" id="X77591">
    <property type="protein sequence ID" value="CAA54693.1"/>
    <property type="molecule type" value="mRNA"/>
</dbReference>
<dbReference type="SMR" id="P40285"/>
<dbReference type="VEuPathDB" id="TriTrypDB:LINF_160011400"/>
<dbReference type="eggNOG" id="KOG1745">
    <property type="taxonomic scope" value="Eukaryota"/>
</dbReference>
<dbReference type="GO" id="GO:0000786">
    <property type="term" value="C:nucleosome"/>
    <property type="evidence" value="ECO:0007669"/>
    <property type="project" value="UniProtKB-KW"/>
</dbReference>
<dbReference type="GO" id="GO:0005634">
    <property type="term" value="C:nucleus"/>
    <property type="evidence" value="ECO:0007669"/>
    <property type="project" value="UniProtKB-SubCell"/>
</dbReference>
<dbReference type="GO" id="GO:0003677">
    <property type="term" value="F:DNA binding"/>
    <property type="evidence" value="ECO:0007669"/>
    <property type="project" value="UniProtKB-KW"/>
</dbReference>
<dbReference type="GO" id="GO:0046982">
    <property type="term" value="F:protein heterodimerization activity"/>
    <property type="evidence" value="ECO:0007669"/>
    <property type="project" value="InterPro"/>
</dbReference>
<dbReference type="GO" id="GO:0030527">
    <property type="term" value="F:structural constituent of chromatin"/>
    <property type="evidence" value="ECO:0007669"/>
    <property type="project" value="InterPro"/>
</dbReference>
<dbReference type="CDD" id="cd22911">
    <property type="entry name" value="HFD_H3"/>
    <property type="match status" value="1"/>
</dbReference>
<dbReference type="FunFam" id="1.10.20.10:FF:000077">
    <property type="entry name" value="Histone H3 variant"/>
    <property type="match status" value="1"/>
</dbReference>
<dbReference type="Gene3D" id="1.10.20.10">
    <property type="entry name" value="Histone, subunit A"/>
    <property type="match status" value="1"/>
</dbReference>
<dbReference type="InterPro" id="IPR009072">
    <property type="entry name" value="Histone-fold"/>
</dbReference>
<dbReference type="InterPro" id="IPR007125">
    <property type="entry name" value="Histone_H2A/H2B/H3"/>
</dbReference>
<dbReference type="InterPro" id="IPR000164">
    <property type="entry name" value="Histone_H3/CENP-A"/>
</dbReference>
<dbReference type="PANTHER" id="PTHR11426">
    <property type="entry name" value="HISTONE H3"/>
    <property type="match status" value="1"/>
</dbReference>
<dbReference type="Pfam" id="PF00125">
    <property type="entry name" value="Histone"/>
    <property type="match status" value="1"/>
</dbReference>
<dbReference type="PRINTS" id="PR00622">
    <property type="entry name" value="HISTONEH3"/>
</dbReference>
<dbReference type="SMART" id="SM00428">
    <property type="entry name" value="H3"/>
    <property type="match status" value="1"/>
</dbReference>
<dbReference type="SUPFAM" id="SSF47113">
    <property type="entry name" value="Histone-fold"/>
    <property type="match status" value="1"/>
</dbReference>
<dbReference type="PROSITE" id="PS00959">
    <property type="entry name" value="HISTONE_H3_2"/>
    <property type="match status" value="1"/>
</dbReference>
<keyword id="KW-0158">Chromosome</keyword>
<keyword id="KW-0238">DNA-binding</keyword>
<keyword id="KW-0544">Nucleosome core</keyword>
<keyword id="KW-0539">Nucleus</keyword>
<protein>
    <recommendedName>
        <fullName>Histone H3</fullName>
    </recommendedName>
</protein>
<feature type="chain" id="PRO_0000221354" description="Histone H3">
    <location>
        <begin position="1"/>
        <end position="129"/>
    </location>
</feature>
<feature type="region of interest" description="Disordered" evidence="2">
    <location>
        <begin position="1"/>
        <end position="36"/>
    </location>
</feature>
<feature type="compositionally biased region" description="Basic residues" evidence="2">
    <location>
        <begin position="10"/>
        <end position="21"/>
    </location>
</feature>
<proteinExistence type="evidence at transcript level"/>
<accession>P40285</accession>